<accession>B4U0X9</accession>
<gene>
    <name evidence="1" type="primary">rpsN</name>
    <name type="ordered locus">Sez_0290</name>
</gene>
<proteinExistence type="inferred from homology"/>
<name>RS14_STREM</name>
<dbReference type="EMBL" id="CP001129">
    <property type="protein sequence ID" value="ACG61666.1"/>
    <property type="status" value="ALT_INIT"/>
    <property type="molecule type" value="Genomic_DNA"/>
</dbReference>
<dbReference type="RefSeq" id="WP_012678537.1">
    <property type="nucleotide sequence ID" value="NC_011134.1"/>
</dbReference>
<dbReference type="SMR" id="B4U0X9"/>
<dbReference type="GeneID" id="83704191"/>
<dbReference type="KEGG" id="sez:Sez_0290"/>
<dbReference type="HOGENOM" id="CLU_139869_0_0_9"/>
<dbReference type="Proteomes" id="UP000001873">
    <property type="component" value="Chromosome"/>
</dbReference>
<dbReference type="GO" id="GO:0005737">
    <property type="term" value="C:cytoplasm"/>
    <property type="evidence" value="ECO:0007669"/>
    <property type="project" value="UniProtKB-ARBA"/>
</dbReference>
<dbReference type="GO" id="GO:0015935">
    <property type="term" value="C:small ribosomal subunit"/>
    <property type="evidence" value="ECO:0007669"/>
    <property type="project" value="TreeGrafter"/>
</dbReference>
<dbReference type="GO" id="GO:0019843">
    <property type="term" value="F:rRNA binding"/>
    <property type="evidence" value="ECO:0007669"/>
    <property type="project" value="UniProtKB-UniRule"/>
</dbReference>
<dbReference type="GO" id="GO:0003735">
    <property type="term" value="F:structural constituent of ribosome"/>
    <property type="evidence" value="ECO:0007669"/>
    <property type="project" value="InterPro"/>
</dbReference>
<dbReference type="GO" id="GO:0006412">
    <property type="term" value="P:translation"/>
    <property type="evidence" value="ECO:0007669"/>
    <property type="project" value="UniProtKB-UniRule"/>
</dbReference>
<dbReference type="Gene3D" id="4.10.830.10">
    <property type="entry name" value="30s Ribosomal Protein S14, Chain N"/>
    <property type="match status" value="1"/>
</dbReference>
<dbReference type="HAMAP" id="MF_00537">
    <property type="entry name" value="Ribosomal_uS14_1"/>
    <property type="match status" value="1"/>
</dbReference>
<dbReference type="InterPro" id="IPR001209">
    <property type="entry name" value="Ribosomal_uS14"/>
</dbReference>
<dbReference type="InterPro" id="IPR023036">
    <property type="entry name" value="Ribosomal_uS14_bac/plastid"/>
</dbReference>
<dbReference type="InterPro" id="IPR043140">
    <property type="entry name" value="Ribosomal_uS14_sf"/>
</dbReference>
<dbReference type="NCBIfam" id="NF006477">
    <property type="entry name" value="PRK08881.1"/>
    <property type="match status" value="1"/>
</dbReference>
<dbReference type="PANTHER" id="PTHR19836">
    <property type="entry name" value="30S RIBOSOMAL PROTEIN S14"/>
    <property type="match status" value="1"/>
</dbReference>
<dbReference type="PANTHER" id="PTHR19836:SF19">
    <property type="entry name" value="SMALL RIBOSOMAL SUBUNIT PROTEIN US14M"/>
    <property type="match status" value="1"/>
</dbReference>
<dbReference type="Pfam" id="PF00253">
    <property type="entry name" value="Ribosomal_S14"/>
    <property type="match status" value="1"/>
</dbReference>
<dbReference type="SUPFAM" id="SSF57716">
    <property type="entry name" value="Glucocorticoid receptor-like (DNA-binding domain)"/>
    <property type="match status" value="1"/>
</dbReference>
<protein>
    <recommendedName>
        <fullName evidence="1">Small ribosomal subunit protein uS14A</fullName>
    </recommendedName>
    <alternativeName>
        <fullName evidence="2">30S ribosomal protein S14</fullName>
    </alternativeName>
</protein>
<evidence type="ECO:0000255" key="1">
    <source>
        <dbReference type="HAMAP-Rule" id="MF_00537"/>
    </source>
</evidence>
<evidence type="ECO:0000305" key="2"/>
<keyword id="KW-0687">Ribonucleoprotein</keyword>
<keyword id="KW-0689">Ribosomal protein</keyword>
<keyword id="KW-0694">RNA-binding</keyword>
<keyword id="KW-0699">rRNA-binding</keyword>
<comment type="function">
    <text evidence="1">Binds 16S rRNA, required for the assembly of 30S particles and may also be responsible for determining the conformation of the 16S rRNA at the A site.</text>
</comment>
<comment type="subunit">
    <text evidence="1">Part of the 30S ribosomal subunit. Contacts proteins S3 and S10.</text>
</comment>
<comment type="similarity">
    <text evidence="1">Belongs to the universal ribosomal protein uS14 family.</text>
</comment>
<comment type="sequence caution" evidence="2">
    <conflict type="erroneous initiation">
        <sequence resource="EMBL-CDS" id="ACG61666"/>
    </conflict>
    <text>Extended N-terminus.</text>
</comment>
<organism>
    <name type="scientific">Streptococcus equi subsp. zooepidemicus (strain MGCS10565)</name>
    <dbReference type="NCBI Taxonomy" id="552526"/>
    <lineage>
        <taxon>Bacteria</taxon>
        <taxon>Bacillati</taxon>
        <taxon>Bacillota</taxon>
        <taxon>Bacilli</taxon>
        <taxon>Lactobacillales</taxon>
        <taxon>Streptococcaceae</taxon>
        <taxon>Streptococcus</taxon>
    </lineage>
</organism>
<reference key="1">
    <citation type="journal article" date="2008" name="PLoS ONE">
        <title>Genome sequence of a lancefield group C Streptococcus zooepidemicus strain causing epidemic nephritis: new information about an old disease.</title>
        <authorList>
            <person name="Beres S.B."/>
            <person name="Sesso R."/>
            <person name="Pinto S.W.L."/>
            <person name="Hoe N.P."/>
            <person name="Porcella S.F."/>
            <person name="Deleo F.R."/>
            <person name="Musser J.M."/>
        </authorList>
    </citation>
    <scope>NUCLEOTIDE SEQUENCE [LARGE SCALE GENOMIC DNA]</scope>
    <source>
        <strain>MGCS10565</strain>
    </source>
</reference>
<feature type="chain" id="PRO_0000354393" description="Small ribosomal subunit protein uS14A">
    <location>
        <begin position="1"/>
        <end position="89"/>
    </location>
</feature>
<sequence>MAKKSKIAKYHKQLQLIEQYADLRRELKAKGDYEALRKLPRDSNPNRLKNRDRIDGRPHAYMRKFGVSRINFRELAHKGQLPGITKASW</sequence>